<gene>
    <name type="ORF">K02A2.6</name>
</gene>
<sequence>MNDLKRSIQKFQFNVAEPEAFKRWLARNKLTFVEDGKNLSERERTRLLLGCLEESTFHRYEDSQREISDIYSISFDDTVTALTKIFGSTKSLMMRRQQCLQICRANGLSQDYLDYTNSISDAVLDSKLSSMTSDEWSIFLFLRGLNSPGDEKAKLYLMQYVEASEKKNEKLKLSDVHDEWMKFIQMHQQSKIVSVKPSKSSQQVDVNKVDTNRSKKKKKPIPRKPEKSSQDSKKKGEIPTCFYCNKKGHYATNCRSNPKTGNQGGNKGKSKGCDSVHVDGLDVKTEHQAKHRMSVEVCGKDVAFQLDTGSMITLISVKCWEKLGSPPLEKVPHRISCANGTPMAVKGRCLVKFKLKGIEYTEYVYVRDRQTNLLGTSWLNLCPQMRSALAQIVNQVSTSETEASRLEVMLKNDFPEVFKDGLGLCTKEKAEFRTEENAVPVFKRARPVPYGSLEAVETELNRLQEMGVIVPITYAKWAAPIVVIKKKGTGKIRVCADFKCSGLNAALKDEFHPLPTSEDIFSRLKGTVYSQIDLKDAYLQVELDEEAQKLAVINTHRGIFKYLRMTFGLKPAPASFQKIMDKMVSGLTGVAVYWDDIIISASSIEEHEKILRELFERFKEYGFRVSAEKCAFAQKQVTFLGFVDEHGRRPDSKKTEAIRSMKAPTDQKQLASFLGAADWLSRMMQDHQQNADDVVIAEIYDDDDDEDDSIIQKLNPVTETDIRFESQKDHEVSSVVKLVRNDSWKPKPSTEIEKHWIRYRDRLKLIHGCLLLDDRVIVPKSLQKIVLKQLHEGHPGIVQMKQKARSFVFWRGLDSDIENMVRHCNNCQENSKMPRVVPLNPWPVPEAPWKRIHIDFAGPLNGCYLLVVVDAKTKYAEVKLTRSISAVTTIDLLEEIFSIHGYPETIISDNGTQLTSHLFAQMCQSHGIEHKTSAVYYPRSNGAAERFVDTLKRGIAKIKGEGSVNQQILNKFLISYRNTPHSALNGSTPAECHFGRKIRTTMSLLMPTDRVLKVPKLTQYQQNMKHHYELRNGARAKAFQVNQKVYVQVHHGNKSQWKHGVIRRKFGGVLYEVQVGDRMQKSHVNQIRTRYGDYSRSSVNPRLSSDPLGFVGESGGDEMSRNDDPVVTSNGSSTDVNRGSRITSELKKKESNAVRGQPCGSCSPTNNDVSAPGYASRSHPTTDPSHSVRRSSRIRRVLDRYGSSVEHPSTSTGTPRGSTSTQLGQASTRNGSRYTASGRNPSCQGNRYSSIRGEGVTARRERVRTTWR</sequence>
<evidence type="ECO:0000255" key="1">
    <source>
        <dbReference type="PROSITE-ProRule" id="PRU00047"/>
    </source>
</evidence>
<evidence type="ECO:0000255" key="2">
    <source>
        <dbReference type="PROSITE-ProRule" id="PRU00405"/>
    </source>
</evidence>
<evidence type="ECO:0000255" key="3">
    <source>
        <dbReference type="PROSITE-ProRule" id="PRU00457"/>
    </source>
</evidence>
<evidence type="ECO:0000256" key="4">
    <source>
        <dbReference type="SAM" id="MobiDB-lite"/>
    </source>
</evidence>
<reference key="1">
    <citation type="journal article" date="1998" name="Science">
        <title>Genome sequence of the nematode C. elegans: a platform for investigating biology.</title>
        <authorList>
            <consortium name="The C. elegans sequencing consortium"/>
        </authorList>
    </citation>
    <scope>NUCLEOTIDE SEQUENCE [LARGE SCALE GENOMIC DNA]</scope>
    <source>
        <strain>Bristol N2</strain>
    </source>
</reference>
<protein>
    <recommendedName>
        <fullName>Uncharacterized protein K02A2.6</fullName>
    </recommendedName>
</protein>
<dbReference type="EMBL" id="FO080416">
    <property type="status" value="NOT_ANNOTATED_CDS"/>
    <property type="molecule type" value="Genomic_DNA"/>
</dbReference>
<dbReference type="PIR" id="B88209">
    <property type="entry name" value="B88209"/>
</dbReference>
<dbReference type="SMR" id="Q09575"/>
<dbReference type="MEROPS" id="A28.A09"/>
<dbReference type="PaxDb" id="6239-F39B3.3"/>
<dbReference type="HOGENOM" id="CLU_1846953_0_0_1"/>
<dbReference type="InParanoid" id="Q09575"/>
<dbReference type="Proteomes" id="UP000001940">
    <property type="component" value="Chromosome II"/>
</dbReference>
<dbReference type="GO" id="GO:0005737">
    <property type="term" value="C:cytoplasm"/>
    <property type="evidence" value="ECO:0007669"/>
    <property type="project" value="UniProtKB-ARBA"/>
</dbReference>
<dbReference type="GO" id="GO:0042575">
    <property type="term" value="C:DNA polymerase complex"/>
    <property type="evidence" value="ECO:0007669"/>
    <property type="project" value="UniProtKB-ARBA"/>
</dbReference>
<dbReference type="GO" id="GO:0019899">
    <property type="term" value="F:enzyme binding"/>
    <property type="evidence" value="ECO:0007669"/>
    <property type="project" value="UniProtKB-ARBA"/>
</dbReference>
<dbReference type="GO" id="GO:0003676">
    <property type="term" value="F:nucleic acid binding"/>
    <property type="evidence" value="ECO:0007669"/>
    <property type="project" value="InterPro"/>
</dbReference>
<dbReference type="GO" id="GO:0008270">
    <property type="term" value="F:zinc ion binding"/>
    <property type="evidence" value="ECO:0007669"/>
    <property type="project" value="UniProtKB-KW"/>
</dbReference>
<dbReference type="GO" id="GO:0015074">
    <property type="term" value="P:DNA integration"/>
    <property type="evidence" value="ECO:0007669"/>
    <property type="project" value="InterPro"/>
</dbReference>
<dbReference type="CDD" id="cd05484">
    <property type="entry name" value="retropepsin_like_LTR_2"/>
    <property type="match status" value="1"/>
</dbReference>
<dbReference type="CDD" id="cd01647">
    <property type="entry name" value="RT_LTR"/>
    <property type="match status" value="1"/>
</dbReference>
<dbReference type="FunFam" id="1.10.340.70:FF:000003">
    <property type="entry name" value="Protein CBG25708"/>
    <property type="match status" value="1"/>
</dbReference>
<dbReference type="FunFam" id="3.30.420.10:FF:000063">
    <property type="entry name" value="Retrovirus-related Pol polyprotein from transposon 297-like Protein"/>
    <property type="match status" value="1"/>
</dbReference>
<dbReference type="Gene3D" id="1.10.340.70">
    <property type="match status" value="1"/>
</dbReference>
<dbReference type="Gene3D" id="3.30.70.270">
    <property type="match status" value="1"/>
</dbReference>
<dbReference type="Gene3D" id="2.40.70.10">
    <property type="entry name" value="Acid Proteases"/>
    <property type="match status" value="1"/>
</dbReference>
<dbReference type="Gene3D" id="3.10.10.10">
    <property type="entry name" value="HIV Type 1 Reverse Transcriptase, subunit A, domain 1"/>
    <property type="match status" value="1"/>
</dbReference>
<dbReference type="Gene3D" id="3.30.420.10">
    <property type="entry name" value="Ribonuclease H-like superfamily/Ribonuclease H"/>
    <property type="match status" value="1"/>
</dbReference>
<dbReference type="Gene3D" id="4.10.60.10">
    <property type="entry name" value="Zinc finger, CCHC-type"/>
    <property type="match status" value="1"/>
</dbReference>
<dbReference type="InterPro" id="IPR043502">
    <property type="entry name" value="DNA/RNA_pol_sf"/>
</dbReference>
<dbReference type="InterPro" id="IPR055510">
    <property type="entry name" value="DUF7083"/>
</dbReference>
<dbReference type="InterPro" id="IPR001584">
    <property type="entry name" value="Integrase_cat-core"/>
</dbReference>
<dbReference type="InterPro" id="IPR041588">
    <property type="entry name" value="Integrase_H2C2"/>
</dbReference>
<dbReference type="InterPro" id="IPR034128">
    <property type="entry name" value="K02A2.6-like"/>
</dbReference>
<dbReference type="InterPro" id="IPR021109">
    <property type="entry name" value="Peptidase_aspartic_dom_sf"/>
</dbReference>
<dbReference type="InterPro" id="IPR043128">
    <property type="entry name" value="Rev_trsase/Diguanyl_cyclase"/>
</dbReference>
<dbReference type="InterPro" id="IPR012337">
    <property type="entry name" value="RNaseH-like_sf"/>
</dbReference>
<dbReference type="InterPro" id="IPR036397">
    <property type="entry name" value="RNaseH_sf"/>
</dbReference>
<dbReference type="InterPro" id="IPR000477">
    <property type="entry name" value="RT_dom"/>
</dbReference>
<dbReference type="InterPro" id="IPR001878">
    <property type="entry name" value="Znf_CCHC"/>
</dbReference>
<dbReference type="InterPro" id="IPR036875">
    <property type="entry name" value="Znf_CCHC_sf"/>
</dbReference>
<dbReference type="PANTHER" id="PTHR36943">
    <property type="entry name" value="CCHC-TYPE DOMAIN-CONTAINING PROTEIN"/>
    <property type="match status" value="1"/>
</dbReference>
<dbReference type="PANTHER" id="PTHR36943:SF1">
    <property type="entry name" value="CCHC-TYPE DOMAIN-CONTAINING PROTEIN"/>
    <property type="match status" value="1"/>
</dbReference>
<dbReference type="Pfam" id="PF13650">
    <property type="entry name" value="Asp_protease_2"/>
    <property type="match status" value="1"/>
</dbReference>
<dbReference type="Pfam" id="PF23309">
    <property type="entry name" value="DUF7083"/>
    <property type="match status" value="1"/>
</dbReference>
<dbReference type="Pfam" id="PF17921">
    <property type="entry name" value="Integrase_H2C2"/>
    <property type="match status" value="1"/>
</dbReference>
<dbReference type="Pfam" id="PF00665">
    <property type="entry name" value="rve"/>
    <property type="match status" value="1"/>
</dbReference>
<dbReference type="Pfam" id="PF00078">
    <property type="entry name" value="RVT_1"/>
    <property type="match status" value="1"/>
</dbReference>
<dbReference type="SMART" id="SM00343">
    <property type="entry name" value="ZnF_C2HC"/>
    <property type="match status" value="1"/>
</dbReference>
<dbReference type="SUPFAM" id="SSF50630">
    <property type="entry name" value="Acid proteases"/>
    <property type="match status" value="1"/>
</dbReference>
<dbReference type="SUPFAM" id="SSF56672">
    <property type="entry name" value="DNA/RNA polymerases"/>
    <property type="match status" value="1"/>
</dbReference>
<dbReference type="SUPFAM" id="SSF57756">
    <property type="entry name" value="Retrovirus zinc finger-like domains"/>
    <property type="match status" value="1"/>
</dbReference>
<dbReference type="SUPFAM" id="SSF53098">
    <property type="entry name" value="Ribonuclease H-like"/>
    <property type="match status" value="1"/>
</dbReference>
<dbReference type="PROSITE" id="PS50994">
    <property type="entry name" value="INTEGRASE"/>
    <property type="match status" value="1"/>
</dbReference>
<dbReference type="PROSITE" id="PS50878">
    <property type="entry name" value="RT_POL"/>
    <property type="match status" value="1"/>
</dbReference>
<dbReference type="PROSITE" id="PS50158">
    <property type="entry name" value="ZF_CCHC"/>
    <property type="match status" value="1"/>
</dbReference>
<proteinExistence type="predicted"/>
<accession>Q09575</accession>
<name>YRD6_CAEEL</name>
<organism>
    <name type="scientific">Caenorhabditis elegans</name>
    <dbReference type="NCBI Taxonomy" id="6239"/>
    <lineage>
        <taxon>Eukaryota</taxon>
        <taxon>Metazoa</taxon>
        <taxon>Ecdysozoa</taxon>
        <taxon>Nematoda</taxon>
        <taxon>Chromadorea</taxon>
        <taxon>Rhabditida</taxon>
        <taxon>Rhabditina</taxon>
        <taxon>Rhabditomorpha</taxon>
        <taxon>Rhabditoidea</taxon>
        <taxon>Rhabditidae</taxon>
        <taxon>Peloderinae</taxon>
        <taxon>Caenorhabditis</taxon>
    </lineage>
</organism>
<feature type="chain" id="PRO_0000065396" description="Uncharacterized protein K02A2.6">
    <location>
        <begin position="1"/>
        <end position="1268"/>
    </location>
</feature>
<feature type="domain" description="Reverse transcriptase" evidence="2">
    <location>
        <begin position="465"/>
        <end position="644"/>
    </location>
</feature>
<feature type="domain" description="Integrase catalytic" evidence="3">
    <location>
        <begin position="844"/>
        <end position="997"/>
    </location>
</feature>
<feature type="zinc finger region" description="CCHC-type" evidence="1">
    <location>
        <begin position="239"/>
        <end position="256"/>
    </location>
</feature>
<feature type="region of interest" description="Disordered" evidence="4">
    <location>
        <begin position="191"/>
        <end position="235"/>
    </location>
</feature>
<feature type="region of interest" description="Disordered" evidence="4">
    <location>
        <begin position="253"/>
        <end position="273"/>
    </location>
</feature>
<feature type="region of interest" description="Disordered" evidence="4">
    <location>
        <begin position="1092"/>
        <end position="1268"/>
    </location>
</feature>
<feature type="compositionally biased region" description="Low complexity" evidence="4">
    <location>
        <begin position="191"/>
        <end position="206"/>
    </location>
</feature>
<feature type="compositionally biased region" description="Basic and acidic residues" evidence="4">
    <location>
        <begin position="223"/>
        <end position="235"/>
    </location>
</feature>
<feature type="compositionally biased region" description="Polar residues" evidence="4">
    <location>
        <begin position="1127"/>
        <end position="1143"/>
    </location>
</feature>
<feature type="compositionally biased region" description="Polar residues" evidence="4">
    <location>
        <begin position="1160"/>
        <end position="1169"/>
    </location>
</feature>
<feature type="compositionally biased region" description="Low complexity" evidence="4">
    <location>
        <begin position="1208"/>
        <end position="1221"/>
    </location>
</feature>
<feature type="compositionally biased region" description="Polar residues" evidence="4">
    <location>
        <begin position="1222"/>
        <end position="1249"/>
    </location>
</feature>
<feature type="compositionally biased region" description="Basic and acidic residues" evidence="4">
    <location>
        <begin position="1257"/>
        <end position="1268"/>
    </location>
</feature>
<keyword id="KW-0479">Metal-binding</keyword>
<keyword id="KW-1185">Reference proteome</keyword>
<keyword id="KW-0862">Zinc</keyword>
<keyword id="KW-0863">Zinc-finger</keyword>